<evidence type="ECO:0000305" key="1"/>
<sequence length="91" mass="9365">MNKNELVSAVAEKAGLTKADAASAVDAVFETVQSELKNGGDIRLAGFGSFSVSRREASKGRNPSTGAEVDIPARNVPKFSAGKGLKDAVNS</sequence>
<reference key="1">
    <citation type="journal article" date="1985" name="Eur. J. Biochem.">
        <title>Characterization and primary structures of DNA-binding HU-type proteins from Rhizobiaceae.</title>
        <authorList>
            <person name="Khanaka H."/>
            <person name="Laine B."/>
            <person name="Sautiere P."/>
            <person name="Guillaume J."/>
        </authorList>
    </citation>
    <scope>PROTEIN SEQUENCE</scope>
    <source>
        <strain>B6</strain>
    </source>
</reference>
<feature type="chain" id="PRO_0000104961" description="DNA-binding protein HRL18">
    <location>
        <begin position="1"/>
        <end position="91"/>
    </location>
</feature>
<dbReference type="RefSeq" id="WP_003502360.1">
    <property type="nucleotide sequence ID" value="NZ_VTZQ01000001.1"/>
</dbReference>
<dbReference type="SMR" id="P0A3H4"/>
<dbReference type="GeneID" id="97364057"/>
<dbReference type="eggNOG" id="COG0776">
    <property type="taxonomic scope" value="Bacteria"/>
</dbReference>
<dbReference type="OrthoDB" id="9799835at2"/>
<dbReference type="GO" id="GO:0005829">
    <property type="term" value="C:cytosol"/>
    <property type="evidence" value="ECO:0007669"/>
    <property type="project" value="TreeGrafter"/>
</dbReference>
<dbReference type="GO" id="GO:0003677">
    <property type="term" value="F:DNA binding"/>
    <property type="evidence" value="ECO:0007669"/>
    <property type="project" value="UniProtKB-KW"/>
</dbReference>
<dbReference type="GO" id="GO:0030527">
    <property type="term" value="F:structural constituent of chromatin"/>
    <property type="evidence" value="ECO:0007669"/>
    <property type="project" value="InterPro"/>
</dbReference>
<dbReference type="GO" id="GO:0030261">
    <property type="term" value="P:chromosome condensation"/>
    <property type="evidence" value="ECO:0007669"/>
    <property type="project" value="UniProtKB-KW"/>
</dbReference>
<dbReference type="CDD" id="cd13831">
    <property type="entry name" value="HU"/>
    <property type="match status" value="1"/>
</dbReference>
<dbReference type="Gene3D" id="4.10.520.10">
    <property type="entry name" value="IHF-like DNA-binding proteins"/>
    <property type="match status" value="1"/>
</dbReference>
<dbReference type="InterPro" id="IPR000119">
    <property type="entry name" value="Hist_DNA-bd"/>
</dbReference>
<dbReference type="InterPro" id="IPR020816">
    <property type="entry name" value="Histone-like_DNA-bd_CS"/>
</dbReference>
<dbReference type="InterPro" id="IPR010992">
    <property type="entry name" value="IHF-like_DNA-bd_dom_sf"/>
</dbReference>
<dbReference type="PANTHER" id="PTHR33175">
    <property type="entry name" value="DNA-BINDING PROTEIN HU"/>
    <property type="match status" value="1"/>
</dbReference>
<dbReference type="PANTHER" id="PTHR33175:SF3">
    <property type="entry name" value="DNA-BINDING PROTEIN HU-BETA"/>
    <property type="match status" value="1"/>
</dbReference>
<dbReference type="Pfam" id="PF00216">
    <property type="entry name" value="Bac_DNA_binding"/>
    <property type="match status" value="1"/>
</dbReference>
<dbReference type="PRINTS" id="PR01727">
    <property type="entry name" value="DNABINDINGHU"/>
</dbReference>
<dbReference type="SMART" id="SM00411">
    <property type="entry name" value="BHL"/>
    <property type="match status" value="1"/>
</dbReference>
<dbReference type="SUPFAM" id="SSF47729">
    <property type="entry name" value="IHF-like DNA-binding proteins"/>
    <property type="match status" value="1"/>
</dbReference>
<dbReference type="PROSITE" id="PS00045">
    <property type="entry name" value="HISTONE_LIKE"/>
    <property type="match status" value="1"/>
</dbReference>
<organism>
    <name type="scientific">Rhizobium radiobacter</name>
    <name type="common">Agrobacterium tumefaciens</name>
    <name type="synonym">Agrobacterium radiobacter</name>
    <dbReference type="NCBI Taxonomy" id="358"/>
    <lineage>
        <taxon>Bacteria</taxon>
        <taxon>Pseudomonadati</taxon>
        <taxon>Pseudomonadota</taxon>
        <taxon>Alphaproteobacteria</taxon>
        <taxon>Hyphomicrobiales</taxon>
        <taxon>Rhizobiaceae</taxon>
        <taxon>Rhizobium/Agrobacterium group</taxon>
        <taxon>Agrobacterium</taxon>
        <taxon>Agrobacterium tumefaciens complex</taxon>
    </lineage>
</organism>
<proteinExistence type="evidence at protein level"/>
<keyword id="KW-0903">Direct protein sequencing</keyword>
<keyword id="KW-0226">DNA condensation</keyword>
<keyword id="KW-0238">DNA-binding</keyword>
<protein>
    <recommendedName>
        <fullName>DNA-binding protein HRL18</fullName>
    </recommendedName>
</protein>
<comment type="function">
    <text>Histone-like DNA-binding protein which is capable of wrapping DNA to stabilize it, and thus to prevent its denaturation under extreme environmental conditions.</text>
</comment>
<comment type="similarity">
    <text evidence="1">Belongs to the bacterial histone-like protein family.</text>
</comment>
<accession>P0A3H4</accession>
<accession>P02347</accession>
<name>DBH1_RHIRD</name>